<comment type="catalytic activity">
    <reaction evidence="1">
        <text>CMP + ATP = CDP + ADP</text>
        <dbReference type="Rhea" id="RHEA:11600"/>
        <dbReference type="ChEBI" id="CHEBI:30616"/>
        <dbReference type="ChEBI" id="CHEBI:58069"/>
        <dbReference type="ChEBI" id="CHEBI:60377"/>
        <dbReference type="ChEBI" id="CHEBI:456216"/>
        <dbReference type="EC" id="2.7.4.25"/>
    </reaction>
</comment>
<comment type="catalytic activity">
    <reaction evidence="1">
        <text>dCMP + ATP = dCDP + ADP</text>
        <dbReference type="Rhea" id="RHEA:25094"/>
        <dbReference type="ChEBI" id="CHEBI:30616"/>
        <dbReference type="ChEBI" id="CHEBI:57566"/>
        <dbReference type="ChEBI" id="CHEBI:58593"/>
        <dbReference type="ChEBI" id="CHEBI:456216"/>
        <dbReference type="EC" id="2.7.4.25"/>
    </reaction>
</comment>
<comment type="subcellular location">
    <subcellularLocation>
        <location evidence="1">Cytoplasm</location>
    </subcellularLocation>
</comment>
<comment type="similarity">
    <text evidence="1">Belongs to the cytidylate kinase family. Type 1 subfamily.</text>
</comment>
<feature type="chain" id="PRO_1000048294" description="Cytidylate kinase">
    <location>
        <begin position="1"/>
        <end position="223"/>
    </location>
</feature>
<feature type="binding site" evidence="1">
    <location>
        <begin position="10"/>
        <end position="18"/>
    </location>
    <ligand>
        <name>ATP</name>
        <dbReference type="ChEBI" id="CHEBI:30616"/>
    </ligand>
</feature>
<accession>Q04JF3</accession>
<dbReference type="EC" id="2.7.4.25" evidence="1"/>
<dbReference type="EMBL" id="CP000410">
    <property type="protein sequence ID" value="ABJ53914.1"/>
    <property type="molecule type" value="Genomic_DNA"/>
</dbReference>
<dbReference type="RefSeq" id="WP_000849378.1">
    <property type="nucleotide sequence ID" value="NZ_JAMLJR010000013.1"/>
</dbReference>
<dbReference type="SMR" id="Q04JF3"/>
<dbReference type="PaxDb" id="373153-SPD_1428"/>
<dbReference type="GeneID" id="45653168"/>
<dbReference type="KEGG" id="spd:SPD_1428"/>
<dbReference type="eggNOG" id="COG0283">
    <property type="taxonomic scope" value="Bacteria"/>
</dbReference>
<dbReference type="HOGENOM" id="CLU_079959_0_2_9"/>
<dbReference type="BioCyc" id="SPNE373153:G1G6V-1540-MONOMER"/>
<dbReference type="Proteomes" id="UP000001452">
    <property type="component" value="Chromosome"/>
</dbReference>
<dbReference type="GO" id="GO:0005829">
    <property type="term" value="C:cytosol"/>
    <property type="evidence" value="ECO:0007669"/>
    <property type="project" value="TreeGrafter"/>
</dbReference>
<dbReference type="GO" id="GO:0005524">
    <property type="term" value="F:ATP binding"/>
    <property type="evidence" value="ECO:0007669"/>
    <property type="project" value="UniProtKB-UniRule"/>
</dbReference>
<dbReference type="GO" id="GO:0036430">
    <property type="term" value="F:CMP kinase activity"/>
    <property type="evidence" value="ECO:0007669"/>
    <property type="project" value="RHEA"/>
</dbReference>
<dbReference type="GO" id="GO:0036431">
    <property type="term" value="F:dCMP kinase activity"/>
    <property type="evidence" value="ECO:0007669"/>
    <property type="project" value="RHEA"/>
</dbReference>
<dbReference type="GO" id="GO:0015949">
    <property type="term" value="P:nucleobase-containing small molecule interconversion"/>
    <property type="evidence" value="ECO:0007669"/>
    <property type="project" value="TreeGrafter"/>
</dbReference>
<dbReference type="GO" id="GO:0006220">
    <property type="term" value="P:pyrimidine nucleotide metabolic process"/>
    <property type="evidence" value="ECO:0007669"/>
    <property type="project" value="UniProtKB-UniRule"/>
</dbReference>
<dbReference type="CDD" id="cd02020">
    <property type="entry name" value="CMPK"/>
    <property type="match status" value="1"/>
</dbReference>
<dbReference type="FunFam" id="3.40.50.300:FF:000484">
    <property type="entry name" value="Cytidylate kinase"/>
    <property type="match status" value="1"/>
</dbReference>
<dbReference type="Gene3D" id="3.40.50.300">
    <property type="entry name" value="P-loop containing nucleotide triphosphate hydrolases"/>
    <property type="match status" value="1"/>
</dbReference>
<dbReference type="HAMAP" id="MF_00238">
    <property type="entry name" value="Cytidyl_kinase_type1"/>
    <property type="match status" value="1"/>
</dbReference>
<dbReference type="InterPro" id="IPR003136">
    <property type="entry name" value="Cytidylate_kin"/>
</dbReference>
<dbReference type="InterPro" id="IPR011994">
    <property type="entry name" value="Cytidylate_kinase_dom"/>
</dbReference>
<dbReference type="InterPro" id="IPR027417">
    <property type="entry name" value="P-loop_NTPase"/>
</dbReference>
<dbReference type="NCBIfam" id="TIGR00017">
    <property type="entry name" value="cmk"/>
    <property type="match status" value="1"/>
</dbReference>
<dbReference type="PANTHER" id="PTHR21299:SF2">
    <property type="entry name" value="CYTIDYLATE KINASE"/>
    <property type="match status" value="1"/>
</dbReference>
<dbReference type="PANTHER" id="PTHR21299">
    <property type="entry name" value="CYTIDYLATE KINASE/PANTOATE-BETA-ALANINE LIGASE"/>
    <property type="match status" value="1"/>
</dbReference>
<dbReference type="Pfam" id="PF02224">
    <property type="entry name" value="Cytidylate_kin"/>
    <property type="match status" value="1"/>
</dbReference>
<dbReference type="SUPFAM" id="SSF52540">
    <property type="entry name" value="P-loop containing nucleoside triphosphate hydrolases"/>
    <property type="match status" value="1"/>
</dbReference>
<reference key="1">
    <citation type="journal article" date="2007" name="J. Bacteriol.">
        <title>Genome sequence of Avery's virulent serotype 2 strain D39 of Streptococcus pneumoniae and comparison with that of unencapsulated laboratory strain R6.</title>
        <authorList>
            <person name="Lanie J.A."/>
            <person name="Ng W.-L."/>
            <person name="Kazmierczak K.M."/>
            <person name="Andrzejewski T.M."/>
            <person name="Davidsen T.M."/>
            <person name="Wayne K.J."/>
            <person name="Tettelin H."/>
            <person name="Glass J.I."/>
            <person name="Winkler M.E."/>
        </authorList>
    </citation>
    <scope>NUCLEOTIDE SEQUENCE [LARGE SCALE GENOMIC DNA]</scope>
    <source>
        <strain>D39 / NCTC 7466</strain>
    </source>
</reference>
<sequence>MKTIQIAIDGPASSGKSTVAKIIAKDFGFTYLDTGAMYRAATYMALKNQLGVEEVEALLALLDQHPISFGRSETGDQLVFVGDVDITHPIRENEVTNHVSAIAAIPEVREKLVSLQQEIAQQGGIVMDGRDIGTVVLPQAELKIFLVASVDERAERRYKENIAKGIETDLETLKKEIAARDYKDSHRETSPLKQAEDAVYLDTTGLNIQEVVEKIKAEAEKRM</sequence>
<gene>
    <name evidence="1" type="primary">cmk</name>
    <name type="ordered locus">SPD_1428</name>
</gene>
<evidence type="ECO:0000255" key="1">
    <source>
        <dbReference type="HAMAP-Rule" id="MF_00238"/>
    </source>
</evidence>
<keyword id="KW-0067">ATP-binding</keyword>
<keyword id="KW-0963">Cytoplasm</keyword>
<keyword id="KW-0418">Kinase</keyword>
<keyword id="KW-0547">Nucleotide-binding</keyword>
<keyword id="KW-1185">Reference proteome</keyword>
<keyword id="KW-0808">Transferase</keyword>
<protein>
    <recommendedName>
        <fullName evidence="1">Cytidylate kinase</fullName>
        <shortName evidence="1">CK</shortName>
        <ecNumber evidence="1">2.7.4.25</ecNumber>
    </recommendedName>
    <alternativeName>
        <fullName evidence="1">Cytidine monophosphate kinase</fullName>
        <shortName evidence="1">CMP kinase</shortName>
    </alternativeName>
</protein>
<name>KCY_STRP2</name>
<organism>
    <name type="scientific">Streptococcus pneumoniae serotype 2 (strain D39 / NCTC 7466)</name>
    <dbReference type="NCBI Taxonomy" id="373153"/>
    <lineage>
        <taxon>Bacteria</taxon>
        <taxon>Bacillati</taxon>
        <taxon>Bacillota</taxon>
        <taxon>Bacilli</taxon>
        <taxon>Lactobacillales</taxon>
        <taxon>Streptococcaceae</taxon>
        <taxon>Streptococcus</taxon>
    </lineage>
</organism>
<proteinExistence type="inferred from homology"/>